<sequence length="546" mass="61874">MFRLSTTPRFTRCFQGRRQRISIAQIPPVQFISYSSSAAQSLSILPNSAFRSLRVCGARFQRFERSQLGLEYCVPRRQIHYYSMGLDKKVAMDKILEGKYPAKEHARKVVEYLRSKEPEAEGVLYLEAQKTVMIEDNDEAAPFRQRRYFYYLTGCDLPDSYFTYNISTGKSTLFIPPIDPESVIWTGLPLSPEEALALYDVDEVLTTDMINAHLALPNQSKVWAIAPQISTHITFLEFPQKDFTLLKEAIEEARVRKSEYEVALIRKANEISTVGHTAVLKAVKHVKNERDLEALFIKESIANGAREQAYHSIVASGTAAATLHYMKNSEGLDGKLNLLLDAGGEYKCYASDITRTFPINGKFTPESRSIYDIVLSMQSQCTSMLKAGVSWDEVHLLAHKIAIEGLLSLNILKGDKDEILKARTSVAFFPHGLGHYLGMDTHDTGGHPNYEDKDRLFRYLRVRGTLPEGSVVTVEPGIYFCRFIIEPYLKDPAHAQYINADILEKYWEVGGVRIEDNILITKDGYDNLTTSIKDVDEMEKIINSVY</sequence>
<proteinExistence type="inferred from homology"/>
<gene>
    <name type="primary">pepP</name>
    <name type="ORF">SS1G_08920</name>
</gene>
<organism>
    <name type="scientific">Sclerotinia sclerotiorum (strain ATCC 18683 / 1980 / Ss-1)</name>
    <name type="common">White mold</name>
    <name type="synonym">Whetzelinia sclerotiorum</name>
    <dbReference type="NCBI Taxonomy" id="665079"/>
    <lineage>
        <taxon>Eukaryota</taxon>
        <taxon>Fungi</taxon>
        <taxon>Dikarya</taxon>
        <taxon>Ascomycota</taxon>
        <taxon>Pezizomycotina</taxon>
        <taxon>Leotiomycetes</taxon>
        <taxon>Helotiales</taxon>
        <taxon>Sclerotiniaceae</taxon>
        <taxon>Sclerotinia</taxon>
    </lineage>
</organism>
<dbReference type="EC" id="3.4.11.9"/>
<dbReference type="EMBL" id="CH476632">
    <property type="protein sequence ID" value="EDN93055.1"/>
    <property type="molecule type" value="Genomic_DNA"/>
</dbReference>
<dbReference type="RefSeq" id="XP_001590156.1">
    <property type="nucleotide sequence ID" value="XM_001590106.1"/>
</dbReference>
<dbReference type="SMR" id="A7EUB3"/>
<dbReference type="FunCoup" id="A7EUB3">
    <property type="interactions" value="390"/>
</dbReference>
<dbReference type="STRING" id="665079.A7EUB3"/>
<dbReference type="MEROPS" id="M24.A09"/>
<dbReference type="GeneID" id="5486403"/>
<dbReference type="KEGG" id="ssl:SS1G_08920"/>
<dbReference type="InParanoid" id="A7EUB3"/>
<dbReference type="OMA" id="DAHALFF"/>
<dbReference type="Proteomes" id="UP000001312">
    <property type="component" value="Unassembled WGS sequence"/>
</dbReference>
<dbReference type="GO" id="GO:0030145">
    <property type="term" value="F:manganese ion binding"/>
    <property type="evidence" value="ECO:0007669"/>
    <property type="project" value="InterPro"/>
</dbReference>
<dbReference type="GO" id="GO:0070006">
    <property type="term" value="F:metalloaminopeptidase activity"/>
    <property type="evidence" value="ECO:0007669"/>
    <property type="project" value="InterPro"/>
</dbReference>
<dbReference type="GO" id="GO:0008233">
    <property type="term" value="F:peptidase activity"/>
    <property type="evidence" value="ECO:0000318"/>
    <property type="project" value="GO_Central"/>
</dbReference>
<dbReference type="GO" id="GO:0006508">
    <property type="term" value="P:proteolysis"/>
    <property type="evidence" value="ECO:0000318"/>
    <property type="project" value="GO_Central"/>
</dbReference>
<dbReference type="CDD" id="cd01087">
    <property type="entry name" value="Prolidase"/>
    <property type="match status" value="1"/>
</dbReference>
<dbReference type="FunFam" id="3.90.230.10:FF:000002">
    <property type="entry name" value="Xaa-Pro aminopeptidase 3"/>
    <property type="match status" value="1"/>
</dbReference>
<dbReference type="Gene3D" id="3.90.230.10">
    <property type="entry name" value="Creatinase/methionine aminopeptidase superfamily"/>
    <property type="match status" value="1"/>
</dbReference>
<dbReference type="Gene3D" id="3.40.350.10">
    <property type="entry name" value="Creatinase/prolidase N-terminal domain"/>
    <property type="match status" value="1"/>
</dbReference>
<dbReference type="InterPro" id="IPR007865">
    <property type="entry name" value="Aminopep_P_N"/>
</dbReference>
<dbReference type="InterPro" id="IPR029149">
    <property type="entry name" value="Creatin/AminoP/Spt16_N"/>
</dbReference>
<dbReference type="InterPro" id="IPR036005">
    <property type="entry name" value="Creatinase/aminopeptidase-like"/>
</dbReference>
<dbReference type="InterPro" id="IPR000994">
    <property type="entry name" value="Pept_M24"/>
</dbReference>
<dbReference type="InterPro" id="IPR052433">
    <property type="entry name" value="X-Pro_dipept-like"/>
</dbReference>
<dbReference type="PANTHER" id="PTHR43226">
    <property type="entry name" value="XAA-PRO AMINOPEPTIDASE 3"/>
    <property type="match status" value="1"/>
</dbReference>
<dbReference type="PANTHER" id="PTHR43226:SF1">
    <property type="entry name" value="XAA-PRO DIPEPTIDASE"/>
    <property type="match status" value="1"/>
</dbReference>
<dbReference type="Pfam" id="PF05195">
    <property type="entry name" value="AMP_N"/>
    <property type="match status" value="1"/>
</dbReference>
<dbReference type="Pfam" id="PF00557">
    <property type="entry name" value="Peptidase_M24"/>
    <property type="match status" value="1"/>
</dbReference>
<dbReference type="SMART" id="SM01011">
    <property type="entry name" value="AMP_N"/>
    <property type="match status" value="1"/>
</dbReference>
<dbReference type="SUPFAM" id="SSF55920">
    <property type="entry name" value="Creatinase/aminopeptidase"/>
    <property type="match status" value="1"/>
</dbReference>
<dbReference type="SUPFAM" id="SSF53092">
    <property type="entry name" value="Creatinase/prolidase N-terminal domain"/>
    <property type="match status" value="1"/>
</dbReference>
<keyword id="KW-0031">Aminopeptidase</keyword>
<keyword id="KW-0378">Hydrolase</keyword>
<keyword id="KW-0464">Manganese</keyword>
<keyword id="KW-0479">Metal-binding</keyword>
<keyword id="KW-0482">Metalloprotease</keyword>
<keyword id="KW-0645">Protease</keyword>
<keyword id="KW-1185">Reference proteome</keyword>
<accession>A7EUB3</accession>
<evidence type="ECO:0000250" key="1"/>
<evidence type="ECO:0000305" key="2"/>
<reference key="1">
    <citation type="journal article" date="2011" name="PLoS Genet.">
        <title>Genomic analysis of the necrotrophic fungal pathogens Sclerotinia sclerotiorum and Botrytis cinerea.</title>
        <authorList>
            <person name="Amselem J."/>
            <person name="Cuomo C.A."/>
            <person name="van Kan J.A.L."/>
            <person name="Viaud M."/>
            <person name="Benito E.P."/>
            <person name="Couloux A."/>
            <person name="Coutinho P.M."/>
            <person name="de Vries R.P."/>
            <person name="Dyer P.S."/>
            <person name="Fillinger S."/>
            <person name="Fournier E."/>
            <person name="Gout L."/>
            <person name="Hahn M."/>
            <person name="Kohn L."/>
            <person name="Lapalu N."/>
            <person name="Plummer K.M."/>
            <person name="Pradier J.-M."/>
            <person name="Quevillon E."/>
            <person name="Sharon A."/>
            <person name="Simon A."/>
            <person name="ten Have A."/>
            <person name="Tudzynski B."/>
            <person name="Tudzynski P."/>
            <person name="Wincker P."/>
            <person name="Andrew M."/>
            <person name="Anthouard V."/>
            <person name="Beever R.E."/>
            <person name="Beffa R."/>
            <person name="Benoit I."/>
            <person name="Bouzid O."/>
            <person name="Brault B."/>
            <person name="Chen Z."/>
            <person name="Choquer M."/>
            <person name="Collemare J."/>
            <person name="Cotton P."/>
            <person name="Danchin E.G."/>
            <person name="Da Silva C."/>
            <person name="Gautier A."/>
            <person name="Giraud C."/>
            <person name="Giraud T."/>
            <person name="Gonzalez C."/>
            <person name="Grossetete S."/>
            <person name="Gueldener U."/>
            <person name="Henrissat B."/>
            <person name="Howlett B.J."/>
            <person name="Kodira C."/>
            <person name="Kretschmer M."/>
            <person name="Lappartient A."/>
            <person name="Leroch M."/>
            <person name="Levis C."/>
            <person name="Mauceli E."/>
            <person name="Neuveglise C."/>
            <person name="Oeser B."/>
            <person name="Pearson M."/>
            <person name="Poulain J."/>
            <person name="Poussereau N."/>
            <person name="Quesneville H."/>
            <person name="Rascle C."/>
            <person name="Schumacher J."/>
            <person name="Segurens B."/>
            <person name="Sexton A."/>
            <person name="Silva E."/>
            <person name="Sirven C."/>
            <person name="Soanes D.M."/>
            <person name="Talbot N.J."/>
            <person name="Templeton M."/>
            <person name="Yandava C."/>
            <person name="Yarden O."/>
            <person name="Zeng Q."/>
            <person name="Rollins J.A."/>
            <person name="Lebrun M.-H."/>
            <person name="Dickman M."/>
        </authorList>
    </citation>
    <scope>NUCLEOTIDE SEQUENCE [LARGE SCALE GENOMIC DNA]</scope>
    <source>
        <strain>ATCC 18683 / 1980 / Ss-1</strain>
    </source>
</reference>
<feature type="chain" id="PRO_0000411888" description="Probable Xaa-Pro aminopeptidase pepP">
    <location>
        <begin position="1"/>
        <end position="546"/>
    </location>
</feature>
<feature type="binding site" evidence="1">
    <location>
        <position position="341"/>
    </location>
    <ligand>
        <name>Mn(2+)</name>
        <dbReference type="ChEBI" id="CHEBI:29035"/>
        <label>2</label>
    </ligand>
</feature>
<feature type="binding site" evidence="1">
    <location>
        <position position="352"/>
    </location>
    <ligand>
        <name>Mn(2+)</name>
        <dbReference type="ChEBI" id="CHEBI:29035"/>
        <label>1</label>
    </ligand>
</feature>
<feature type="binding site" evidence="1">
    <location>
        <position position="352"/>
    </location>
    <ligand>
        <name>Mn(2+)</name>
        <dbReference type="ChEBI" id="CHEBI:29035"/>
        <label>2</label>
    </ligand>
</feature>
<feature type="binding site" evidence="1">
    <location>
        <position position="475"/>
    </location>
    <ligand>
        <name>Mn(2+)</name>
        <dbReference type="ChEBI" id="CHEBI:29035"/>
        <label>1</label>
    </ligand>
</feature>
<feature type="binding site" evidence="1">
    <location>
        <position position="515"/>
    </location>
    <ligand>
        <name>Mn(2+)</name>
        <dbReference type="ChEBI" id="CHEBI:29035"/>
        <label>1</label>
    </ligand>
</feature>
<feature type="binding site" evidence="1">
    <location>
        <position position="515"/>
    </location>
    <ligand>
        <name>Mn(2+)</name>
        <dbReference type="ChEBI" id="CHEBI:29035"/>
        <label>2</label>
    </ligand>
</feature>
<protein>
    <recommendedName>
        <fullName>Probable Xaa-Pro aminopeptidase pepP</fullName>
        <ecNumber>3.4.11.9</ecNumber>
    </recommendedName>
    <alternativeName>
        <fullName>Aminoacylproline aminopeptidase</fullName>
    </alternativeName>
    <alternativeName>
        <fullName>Prolidase</fullName>
    </alternativeName>
</protein>
<comment type="function">
    <text evidence="1">Catalyzes the removal of a penultimate prolyl residue from the N-termini of peptides.</text>
</comment>
<comment type="catalytic activity">
    <reaction>
        <text>Release of any N-terminal amino acid, including proline, that is linked to proline, even from a dipeptide or tripeptide.</text>
        <dbReference type="EC" id="3.4.11.9"/>
    </reaction>
</comment>
<comment type="cofactor">
    <cofactor evidence="1">
        <name>Mn(2+)</name>
        <dbReference type="ChEBI" id="CHEBI:29035"/>
    </cofactor>
    <text evidence="1">Binds 2 manganese ions per subunit.</text>
</comment>
<comment type="similarity">
    <text evidence="2">Belongs to the peptidase M24B family.</text>
</comment>
<name>AMPP3_SCLS1</name>